<proteinExistence type="evidence at protein level"/>
<dbReference type="EMBL" id="X58253">
    <property type="protein sequence ID" value="CAA41207.1"/>
    <property type="molecule type" value="Genomic_DNA"/>
</dbReference>
<dbReference type="PIR" id="S18351">
    <property type="entry name" value="UQTO7A"/>
</dbReference>
<dbReference type="RefSeq" id="NP_001333335.1">
    <property type="nucleotide sequence ID" value="NM_001346406.1"/>
</dbReference>
<dbReference type="SMR" id="P62980"/>
<dbReference type="DIP" id="DIP-61110N"/>
<dbReference type="FunCoup" id="P62980">
    <property type="interactions" value="1153"/>
</dbReference>
<dbReference type="IntAct" id="P62980">
    <property type="interactions" value="2"/>
</dbReference>
<dbReference type="STRING" id="4081.P62980"/>
<dbReference type="PaxDb" id="4081-Solyc01g056940.2.1"/>
<dbReference type="GeneID" id="101256912"/>
<dbReference type="KEGG" id="sly:101256912"/>
<dbReference type="eggNOG" id="KOG0004">
    <property type="taxonomic scope" value="Eukaryota"/>
</dbReference>
<dbReference type="InParanoid" id="P62980"/>
<dbReference type="OrthoDB" id="1296040at2759"/>
<dbReference type="Proteomes" id="UP000004994">
    <property type="component" value="Unplaced"/>
</dbReference>
<dbReference type="ExpressionAtlas" id="P62980">
    <property type="expression patterns" value="baseline and differential"/>
</dbReference>
<dbReference type="GO" id="GO:0005737">
    <property type="term" value="C:cytoplasm"/>
    <property type="evidence" value="ECO:0000318"/>
    <property type="project" value="GO_Central"/>
</dbReference>
<dbReference type="GO" id="GO:0005634">
    <property type="term" value="C:nucleus"/>
    <property type="evidence" value="ECO:0000318"/>
    <property type="project" value="GO_Central"/>
</dbReference>
<dbReference type="GO" id="GO:1990904">
    <property type="term" value="C:ribonucleoprotein complex"/>
    <property type="evidence" value="ECO:0007669"/>
    <property type="project" value="UniProtKB-KW"/>
</dbReference>
<dbReference type="GO" id="GO:0005840">
    <property type="term" value="C:ribosome"/>
    <property type="evidence" value="ECO:0007669"/>
    <property type="project" value="UniProtKB-KW"/>
</dbReference>
<dbReference type="GO" id="GO:0003729">
    <property type="term" value="F:mRNA binding"/>
    <property type="evidence" value="ECO:0007669"/>
    <property type="project" value="UniProtKB-ARBA"/>
</dbReference>
<dbReference type="GO" id="GO:0031386">
    <property type="term" value="F:protein tag activity"/>
    <property type="evidence" value="ECO:0000318"/>
    <property type="project" value="GO_Central"/>
</dbReference>
<dbReference type="GO" id="GO:0003735">
    <property type="term" value="F:structural constituent of ribosome"/>
    <property type="evidence" value="ECO:0007669"/>
    <property type="project" value="InterPro"/>
</dbReference>
<dbReference type="GO" id="GO:0031625">
    <property type="term" value="F:ubiquitin protein ligase binding"/>
    <property type="evidence" value="ECO:0000318"/>
    <property type="project" value="GO_Central"/>
</dbReference>
<dbReference type="GO" id="GO:0008270">
    <property type="term" value="F:zinc ion binding"/>
    <property type="evidence" value="ECO:0007669"/>
    <property type="project" value="UniProtKB-KW"/>
</dbReference>
<dbReference type="GO" id="GO:0019941">
    <property type="term" value="P:modification-dependent protein catabolic process"/>
    <property type="evidence" value="ECO:0000318"/>
    <property type="project" value="GO_Central"/>
</dbReference>
<dbReference type="GO" id="GO:0016567">
    <property type="term" value="P:protein ubiquitination"/>
    <property type="evidence" value="ECO:0000318"/>
    <property type="project" value="GO_Central"/>
</dbReference>
<dbReference type="GO" id="GO:0006412">
    <property type="term" value="P:translation"/>
    <property type="evidence" value="ECO:0007669"/>
    <property type="project" value="InterPro"/>
</dbReference>
<dbReference type="CDD" id="cd01803">
    <property type="entry name" value="Ubl_ubiquitin"/>
    <property type="match status" value="1"/>
</dbReference>
<dbReference type="FunFam" id="3.10.20.90:FF:000008">
    <property type="entry name" value="Ubiquitin-40S ribosomal protein S27a"/>
    <property type="match status" value="1"/>
</dbReference>
<dbReference type="Gene3D" id="6.20.50.150">
    <property type="match status" value="1"/>
</dbReference>
<dbReference type="Gene3D" id="3.10.20.90">
    <property type="entry name" value="Phosphatidylinositol 3-kinase Catalytic Subunit, Chain A, domain 1"/>
    <property type="match status" value="1"/>
</dbReference>
<dbReference type="InterPro" id="IPR002906">
    <property type="entry name" value="Ribosomal_eS31"/>
</dbReference>
<dbReference type="InterPro" id="IPR038582">
    <property type="entry name" value="Ribosomal_eS31_euk-type_sf"/>
</dbReference>
<dbReference type="InterPro" id="IPR011332">
    <property type="entry name" value="Ribosomal_zn-bd"/>
</dbReference>
<dbReference type="InterPro" id="IPR000626">
    <property type="entry name" value="Ubiquitin-like_dom"/>
</dbReference>
<dbReference type="InterPro" id="IPR029071">
    <property type="entry name" value="Ubiquitin-like_domsf"/>
</dbReference>
<dbReference type="InterPro" id="IPR019954">
    <property type="entry name" value="Ubiquitin_CS"/>
</dbReference>
<dbReference type="InterPro" id="IPR019956">
    <property type="entry name" value="Ubiquitin_dom"/>
</dbReference>
<dbReference type="InterPro" id="IPR050158">
    <property type="entry name" value="Ubiquitin_ubiquitin-like"/>
</dbReference>
<dbReference type="PANTHER" id="PTHR10666">
    <property type="entry name" value="UBIQUITIN"/>
    <property type="match status" value="1"/>
</dbReference>
<dbReference type="Pfam" id="PF01599">
    <property type="entry name" value="Ribosomal_S27"/>
    <property type="match status" value="1"/>
</dbReference>
<dbReference type="Pfam" id="PF00240">
    <property type="entry name" value="ubiquitin"/>
    <property type="match status" value="1"/>
</dbReference>
<dbReference type="PRINTS" id="PR00348">
    <property type="entry name" value="UBIQUITIN"/>
</dbReference>
<dbReference type="SMART" id="SM01402">
    <property type="entry name" value="Ribosomal_S27"/>
    <property type="match status" value="1"/>
</dbReference>
<dbReference type="SMART" id="SM00213">
    <property type="entry name" value="UBQ"/>
    <property type="match status" value="1"/>
</dbReference>
<dbReference type="SUPFAM" id="SSF54236">
    <property type="entry name" value="Ubiquitin-like"/>
    <property type="match status" value="1"/>
</dbReference>
<dbReference type="SUPFAM" id="SSF57829">
    <property type="entry name" value="Zn-binding ribosomal proteins"/>
    <property type="match status" value="1"/>
</dbReference>
<dbReference type="PROSITE" id="PS00299">
    <property type="entry name" value="UBIQUITIN_1"/>
    <property type="match status" value="1"/>
</dbReference>
<dbReference type="PROSITE" id="PS50053">
    <property type="entry name" value="UBIQUITIN_2"/>
    <property type="match status" value="1"/>
</dbReference>
<comment type="function">
    <molecule>Ubiquitin</molecule>
    <text evidence="1">Exists either covalently attached to another protein, or free (unanchored). When covalently bound, it is conjugated to target proteins via an isopeptide bond either as a monomer (monoubiquitin), a polymer linked via different Lys residues of the ubiquitin (polyubiquitin chains) or a linear polymer linked via the initiator Met of the ubiquitin (linear polyubiquitin chains). Polyubiquitin chains, when attached to a target protein, have different functions depending on the Lys residue of the ubiquitin that is linked: Lys-48-linked is involved in protein degradation via the proteasome. Linear polymer chains formed via attachment by the initiator Met lead to cell signaling. Ubiquitin is usually conjugated to Lys residues of target proteins, however, in rare cases, conjugation to Cys or Ser residues has been observed. When polyubiquitin is free (unanchored-polyubiquitin), it also has distinct roles, such as in activation of protein kinases, and in signaling (By similarity).</text>
</comment>
<comment type="function">
    <molecule>Small ribosomal subunit protein eS31</molecule>
    <text>Component of the 40S subunit of the ribosome.</text>
</comment>
<comment type="subunit">
    <molecule>Small ribosomal subunit protein eS31</molecule>
    <text evidence="1">Part of the 40S ribosomal subunit.</text>
</comment>
<comment type="interaction">
    <interactant intactId="EBI-15569288">
        <id>P62980</id>
    </interactant>
    <interactant intactId="EBI-15569263">
        <id>Q8RSY1</id>
        <label>hopAB2</label>
    </interactant>
    <organismsDiffer>true</organismsDiffer>
    <experiments>3</experiments>
</comment>
<comment type="subcellular location">
    <molecule>Ubiquitin</molecule>
    <subcellularLocation>
        <location evidence="1">Cytoplasm</location>
    </subcellularLocation>
    <subcellularLocation>
        <location evidence="1">Nucleus</location>
    </subcellularLocation>
</comment>
<comment type="miscellaneous">
    <text>Ubiquitin is generally synthesized as a polyubiquitin precursor with tandem head to tail repeats. Often, there are one to three additional amino acids after the last repeat, removed in the mature protein. Alternatively, ubiquitin extension protein is synthesized as a single copy of ubiquitin fused to a ribosomal protein (either eL40 or eS31) or to an ubiquitin-related protein (either RUB1 or RUB2). Following translation, extension protein is cleaved from ubiquitin.</text>
</comment>
<comment type="similarity">
    <text evidence="3">In the N-terminal section; belongs to the ubiquitin family.</text>
</comment>
<comment type="similarity">
    <text evidence="3">In the C-terminal section; belongs to the eukaryotic ribosomal protein eS31 family.</text>
</comment>
<accession>P62980</accession>
<accession>O82079</accession>
<accession>P03993</accession>
<accession>P27083</accession>
<accession>P69318</accession>
<keyword id="KW-0963">Cytoplasm</keyword>
<keyword id="KW-1017">Isopeptide bond</keyword>
<keyword id="KW-0479">Metal-binding</keyword>
<keyword id="KW-0539">Nucleus</keyword>
<keyword id="KW-1185">Reference proteome</keyword>
<keyword id="KW-0687">Ribonucleoprotein</keyword>
<keyword id="KW-0689">Ribosomal protein</keyword>
<keyword id="KW-0832">Ubl conjugation</keyword>
<keyword id="KW-0862">Zinc</keyword>
<keyword id="KW-0863">Zinc-finger</keyword>
<reference key="1">
    <citation type="journal article" date="1991" name="Plant Mol. Biol.">
        <title>Isolation and characterization of tomato cDNA and genomic clones encoding the ubiquitin gene ubi3.</title>
        <authorList>
            <person name="Hoffman N.E."/>
            <person name="Ko K."/>
            <person name="Milkowski D."/>
            <person name="Pichersky E."/>
        </authorList>
    </citation>
    <scope>NUCLEOTIDE SEQUENCE [GENOMIC DNA]</scope>
    <source>
        <tissue>Root</tissue>
    </source>
</reference>
<gene>
    <name type="primary">UBI3</name>
    <name type="synonym">RPS27A</name>
</gene>
<name>RS27A_SOLLC</name>
<evidence type="ECO:0000250" key="1"/>
<evidence type="ECO:0000255" key="2">
    <source>
        <dbReference type="PROSITE-ProRule" id="PRU00214"/>
    </source>
</evidence>
<evidence type="ECO:0000305" key="3"/>
<protein>
    <recommendedName>
        <fullName evidence="3">Ubiquitin-ribosomal protein eS31 fusion protein</fullName>
    </recommendedName>
    <component>
        <recommendedName>
            <fullName>Ubiquitin</fullName>
        </recommendedName>
    </component>
    <component>
        <recommendedName>
            <fullName evidence="3">Small ribosomal subunit protein eS31</fullName>
        </recommendedName>
        <alternativeName>
            <fullName>40S ribosomal protein S27a</fullName>
        </alternativeName>
    </component>
</protein>
<organism>
    <name type="scientific">Solanum lycopersicum</name>
    <name type="common">Tomato</name>
    <name type="synonym">Lycopersicon esculentum</name>
    <dbReference type="NCBI Taxonomy" id="4081"/>
    <lineage>
        <taxon>Eukaryota</taxon>
        <taxon>Viridiplantae</taxon>
        <taxon>Streptophyta</taxon>
        <taxon>Embryophyta</taxon>
        <taxon>Tracheophyta</taxon>
        <taxon>Spermatophyta</taxon>
        <taxon>Magnoliopsida</taxon>
        <taxon>eudicotyledons</taxon>
        <taxon>Gunneridae</taxon>
        <taxon>Pentapetalae</taxon>
        <taxon>asterids</taxon>
        <taxon>lamiids</taxon>
        <taxon>Solanales</taxon>
        <taxon>Solanaceae</taxon>
        <taxon>Solanoideae</taxon>
        <taxon>Solaneae</taxon>
        <taxon>Solanum</taxon>
        <taxon>Solanum subgen. Lycopersicon</taxon>
    </lineage>
</organism>
<sequence length="156" mass="17702">MQIFVKTLTGKTITLEVESSDTIDNVKAKIQDKEGIPPDQQRLIFAGKQLEDGRTLADYNIQKESTLHLVLRLRGGAKKRKKKTYTKPKKIKHKKKKVKLAVLQFYKVDDTGKVQRLRKECPNAECGAGTFMANHFDRHYCGKCGLTYVYNKAGGD</sequence>
<feature type="chain" id="PRO_0000114845" description="Ubiquitin">
    <location>
        <begin position="1"/>
        <end position="76"/>
    </location>
</feature>
<feature type="chain" id="PRO_0000137681" description="Small ribosomal subunit protein eS31">
    <location>
        <begin position="77"/>
        <end position="156"/>
    </location>
</feature>
<feature type="domain" description="Ubiquitin-like" evidence="2">
    <location>
        <begin position="1"/>
        <end position="76"/>
    </location>
</feature>
<feature type="zinc finger region" description="C4-type">
    <location>
        <begin position="121"/>
        <end position="144"/>
    </location>
</feature>
<feature type="cross-link" description="Glycyl lysine isopeptide (Lys-Gly) (interchain with G-Cter in ubiquitin)" evidence="1">
    <location>
        <position position="48"/>
    </location>
</feature>
<feature type="cross-link" description="Glycyl lysine isopeptide (Gly-Lys) (interchain with K-? in acceptor proteins)" evidence="2">
    <location>
        <position position="76"/>
    </location>
</feature>